<sequence>MAPPSEETPLIPQRSCSLLSTEAGALHVLLPARGPGPPQRLSFSFGDHLAEDLCVQAAKASGILPVYHSLFALATEDLSCWFPPSHIFSVEDASTQVLLYRIRFYFPNWFGLEKCHRFGLRKDLASAILDLPVLEHLFAQHRSDLVSGRLPVGLSLKEQGECLSLAVLDLARMAREQAQRPGELLKTVSYKACLPPSLRDLIQGLSFVTRRRIRRTVRRALRRVAACQADRHSLMAKYIMDLERLDPAGAAETFHVGLPGALGGHDGLGLLRVAGDGGIAWTQGEQEVLQPFCDFPEIVDISIKQAPRVGPAGEHRLVTVTRTDNQILEAEFPGLPEALSFVALVDGYFRLTTDSQHFFCKEVAPPRLLEEVAEQCHGPITLDFAINKLKTGGSRPGSYVLRRSPQDFDSFLLTVCVQNPLGPDYKGCLIRRSPTGTFLLVGLSRPHSSLRELLATCWDGGLHVDGVAVTLTSCCIPRPKEKSNLIVVQRGHSPPTSSLVQPQSQYQLSQMTFHKIPADSLEWHENLGHGSFTKIYRGCRHEVVDGEARKTEVLLKVMDAKHKNCMESFLEAASLMSQVSYRHLVLLHGVCMAGDSTMVQEFVHLGAIDMYLRKRGHLVPASWKLQVVKQLAYALNYLEDKGLPHGNVSARKVLLAREGADGSPPFIKLSDPGVSPAVLSLEMLTDRIPWVAPECLREAQTLSLEADKWGFGATVWEVFSGVTMPISALDPAKKLQFYEDRQQLPAPKWTELALLIQQCMAYEPVQRPSFRAVIRDLNSLISSDYELLSDPTPGALAPRDGLWNGAQLYACQDPTIFEERHLKYISQLGKGNFGSVELCRYDPLGDNTGALVAVKQLQHSGPDQQRDFQREIQILKALHSDFIVKYRGVSYGPGRQSLRLVMEYLPSGCLRDFLQRHRARLDASRLLLYSSQICKGMEYLGSRRCVHRDLAARNILVESEAHVKIADFGLAKLLPLDKDYYVVREPGQSPIFWYAPESLSDNIFSRQSDVWSFGVVLYELFTYCDKSCSPSAEFLRMMGCERDVPALCRLLELLEEGQRLPAPPACPAEVHELMKLCWAPSPQDRPSFSALGPQLDMLWSGSRGCETHAFTAHPEGKHHSLSFS</sequence>
<organism>
    <name type="scientific">Homo sapiens</name>
    <name type="common">Human</name>
    <dbReference type="NCBI Taxonomy" id="9606"/>
    <lineage>
        <taxon>Eukaryota</taxon>
        <taxon>Metazoa</taxon>
        <taxon>Chordata</taxon>
        <taxon>Craniata</taxon>
        <taxon>Vertebrata</taxon>
        <taxon>Euteleostomi</taxon>
        <taxon>Mammalia</taxon>
        <taxon>Eutheria</taxon>
        <taxon>Euarchontoglires</taxon>
        <taxon>Primates</taxon>
        <taxon>Haplorrhini</taxon>
        <taxon>Catarrhini</taxon>
        <taxon>Hominidae</taxon>
        <taxon>Homo</taxon>
    </lineage>
</organism>
<reference key="1">
    <citation type="journal article" date="1994" name="Proc. Natl. Acad. Sci. U.S.A.">
        <title>Molecular cloning of L-JAK, a Janus family protein-tyrosine kinase expressed in natural killer cells and activated leukocytes.</title>
        <authorList>
            <person name="Kawamura M."/>
            <person name="McVicar D.W."/>
            <person name="Johnston J.A."/>
            <person name="Blake T.B."/>
            <person name="Chen Y.-Q."/>
            <person name="Lal B.K."/>
            <person name="Lloyd A.R."/>
            <person name="Kelvin D.J."/>
            <person name="Staples J.E."/>
            <person name="Ortaldo J.R."/>
            <person name="O'Shea J.J."/>
        </authorList>
    </citation>
    <scope>NUCLEOTIDE SEQUENCE [MRNA] (ISOFORM 2)</scope>
</reference>
<reference key="2">
    <citation type="journal article" date="1995" name="J. Biol. Chem.">
        <title>A kinase-deficient splice variant of the human JAK3 is expressed in hematopoietic and epithelial cancer cells.</title>
        <authorList>
            <person name="Lai K.S."/>
            <person name="Jin Y."/>
            <person name="Graham D.K."/>
            <person name="Witthuhn B.A."/>
            <person name="Ihle J.N."/>
            <person name="Liu E.T."/>
        </authorList>
    </citation>
    <scope>NUCLEOTIDE SEQUENCE [MRNA] (ISOFORM 1)</scope>
    <scope>ALTERNATIVE SPLICING (ISOFORM 2)</scope>
</reference>
<reference key="3">
    <citation type="journal article" date="1996" name="Genomics">
        <title>Genomic sequence, organization, and chromosomal localization of human JAK3.</title>
        <authorList>
            <person name="Riedy M.C."/>
            <person name="Dutra A.S."/>
            <person name="Blake T.B."/>
            <person name="Modi W."/>
            <person name="Lal B.K."/>
            <person name="Davis J."/>
            <person name="Bosse A."/>
            <person name="O'Shea J.J."/>
            <person name="Johnston J.A."/>
        </authorList>
    </citation>
    <scope>NUCLEOTIDE SEQUENCE [GENOMIC DNA]</scope>
</reference>
<reference key="4">
    <citation type="submission" date="2002-05" db="EMBL/GenBank/DDBJ databases">
        <authorList>
            <consortium name="SeattleSNPs variation discovery resource"/>
        </authorList>
    </citation>
    <scope>NUCLEOTIDE SEQUENCE [GENOMIC DNA]</scope>
    <scope>VARIANTS THR-132 AND ILE-722</scope>
</reference>
<reference key="5">
    <citation type="journal article" date="2004" name="Nature">
        <title>The DNA sequence and biology of human chromosome 19.</title>
        <authorList>
            <person name="Grimwood J."/>
            <person name="Gordon L.A."/>
            <person name="Olsen A.S."/>
            <person name="Terry A."/>
            <person name="Schmutz J."/>
            <person name="Lamerdin J.E."/>
            <person name="Hellsten U."/>
            <person name="Goodstein D."/>
            <person name="Couronne O."/>
            <person name="Tran-Gyamfi M."/>
            <person name="Aerts A."/>
            <person name="Altherr M."/>
            <person name="Ashworth L."/>
            <person name="Bajorek E."/>
            <person name="Black S."/>
            <person name="Branscomb E."/>
            <person name="Caenepeel S."/>
            <person name="Carrano A.V."/>
            <person name="Caoile C."/>
            <person name="Chan Y.M."/>
            <person name="Christensen M."/>
            <person name="Cleland C.A."/>
            <person name="Copeland A."/>
            <person name="Dalin E."/>
            <person name="Dehal P."/>
            <person name="Denys M."/>
            <person name="Detter J.C."/>
            <person name="Escobar J."/>
            <person name="Flowers D."/>
            <person name="Fotopulos D."/>
            <person name="Garcia C."/>
            <person name="Georgescu A.M."/>
            <person name="Glavina T."/>
            <person name="Gomez M."/>
            <person name="Gonzales E."/>
            <person name="Groza M."/>
            <person name="Hammon N."/>
            <person name="Hawkins T."/>
            <person name="Haydu L."/>
            <person name="Ho I."/>
            <person name="Huang W."/>
            <person name="Israni S."/>
            <person name="Jett J."/>
            <person name="Kadner K."/>
            <person name="Kimball H."/>
            <person name="Kobayashi A."/>
            <person name="Larionov V."/>
            <person name="Leem S.-H."/>
            <person name="Lopez F."/>
            <person name="Lou Y."/>
            <person name="Lowry S."/>
            <person name="Malfatti S."/>
            <person name="Martinez D."/>
            <person name="McCready P.M."/>
            <person name="Medina C."/>
            <person name="Morgan J."/>
            <person name="Nelson K."/>
            <person name="Nolan M."/>
            <person name="Ovcharenko I."/>
            <person name="Pitluck S."/>
            <person name="Pollard M."/>
            <person name="Popkie A.P."/>
            <person name="Predki P."/>
            <person name="Quan G."/>
            <person name="Ramirez L."/>
            <person name="Rash S."/>
            <person name="Retterer J."/>
            <person name="Rodriguez A."/>
            <person name="Rogers S."/>
            <person name="Salamov A."/>
            <person name="Salazar A."/>
            <person name="She X."/>
            <person name="Smith D."/>
            <person name="Slezak T."/>
            <person name="Solovyev V."/>
            <person name="Thayer N."/>
            <person name="Tice H."/>
            <person name="Tsai M."/>
            <person name="Ustaszewska A."/>
            <person name="Vo N."/>
            <person name="Wagner M."/>
            <person name="Wheeler J."/>
            <person name="Wu K."/>
            <person name="Xie G."/>
            <person name="Yang J."/>
            <person name="Dubchak I."/>
            <person name="Furey T.S."/>
            <person name="DeJong P."/>
            <person name="Dickson M."/>
            <person name="Gordon D."/>
            <person name="Eichler E.E."/>
            <person name="Pennacchio L.A."/>
            <person name="Richardson P."/>
            <person name="Stubbs L."/>
            <person name="Rokhsar D.S."/>
            <person name="Myers R.M."/>
            <person name="Rubin E.M."/>
            <person name="Lucas S.M."/>
        </authorList>
    </citation>
    <scope>NUCLEOTIDE SEQUENCE [LARGE SCALE GENOMIC DNA]</scope>
</reference>
<reference key="6">
    <citation type="submission" date="2005-07" db="EMBL/GenBank/DDBJ databases">
        <authorList>
            <person name="Mural R.J."/>
            <person name="Istrail S."/>
            <person name="Sutton G."/>
            <person name="Florea L."/>
            <person name="Halpern A.L."/>
            <person name="Mobarry C.M."/>
            <person name="Lippert R."/>
            <person name="Walenz B."/>
            <person name="Shatkay H."/>
            <person name="Dew I."/>
            <person name="Miller J.R."/>
            <person name="Flanigan M.J."/>
            <person name="Edwards N.J."/>
            <person name="Bolanos R."/>
            <person name="Fasulo D."/>
            <person name="Halldorsson B.V."/>
            <person name="Hannenhalli S."/>
            <person name="Turner R."/>
            <person name="Yooseph S."/>
            <person name="Lu F."/>
            <person name="Nusskern D.R."/>
            <person name="Shue B.C."/>
            <person name="Zheng X.H."/>
            <person name="Zhong F."/>
            <person name="Delcher A.L."/>
            <person name="Huson D.H."/>
            <person name="Kravitz S.A."/>
            <person name="Mouchard L."/>
            <person name="Reinert K."/>
            <person name="Remington K.A."/>
            <person name="Clark A.G."/>
            <person name="Waterman M.S."/>
            <person name="Eichler E.E."/>
            <person name="Adams M.D."/>
            <person name="Hunkapiller M.W."/>
            <person name="Myers E.W."/>
            <person name="Venter J.C."/>
        </authorList>
    </citation>
    <scope>NUCLEOTIDE SEQUENCE [LARGE SCALE GENOMIC DNA]</scope>
</reference>
<reference key="7">
    <citation type="journal article" date="2004" name="Genome Res.">
        <title>The status, quality, and expansion of the NIH full-length cDNA project: the Mammalian Gene Collection (MGC).</title>
        <authorList>
            <consortium name="The MGC Project Team"/>
        </authorList>
    </citation>
    <scope>NUCLEOTIDE SEQUENCE [LARGE SCALE MRNA] (ISOFORM 3)</scope>
    <source>
        <tissue>Blood</tissue>
    </source>
</reference>
<reference key="8">
    <citation type="journal article" date="1996" name="J. Biol. Chem.">
        <title>Expression of Janus kinase 3 in human endothelial and other non-lymphoid and non-myeloid cells.</title>
        <authorList>
            <person name="Verbsky J.W."/>
            <person name="Bach E.A."/>
            <person name="Fang Y.F."/>
            <person name="Yang L."/>
            <person name="Randolph D.A."/>
            <person name="Fields L.E."/>
        </authorList>
    </citation>
    <scope>NUCLEOTIDE SEQUENCE [MRNA] OF 36-191</scope>
</reference>
<reference key="9">
    <citation type="journal article" date="1994" name="Nature">
        <title>Phosphorylation and activation of the Jak-3 Janus kinase in response to interleukin-2.</title>
        <authorList>
            <person name="Johnston J.A."/>
            <person name="Kawamura M."/>
            <person name="Kirken R.A."/>
            <person name="Chen Y.Q."/>
            <person name="Blake T.B."/>
            <person name="Shibuya K."/>
            <person name="Ortaldo J.R."/>
            <person name="McVicar D.W."/>
            <person name="O'Shea J.J."/>
        </authorList>
    </citation>
    <scope>FUNCTION IN IL2 SIGNALING PATHWAY</scope>
</reference>
<reference key="10">
    <citation type="journal article" date="1995" name="Blood">
        <title>JAK3 protein tyrosine kinase mediates interleukin-7-induced activation of phosphatidylinositol-3' kinase.</title>
        <authorList>
            <person name="Sharfe N."/>
            <person name="Dadi H.K."/>
            <person name="Roifman C.M."/>
        </authorList>
    </citation>
    <scope>FUNCTION IN IL7 SIGNALING PATHWAY</scope>
</reference>
<reference key="11">
    <citation type="journal article" date="1995" name="J. Exp. Med.">
        <title>Regulation of JAK3 expression in human monocytes: phosphorylation in response to interleukins 2, 4, and 7.</title>
        <authorList>
            <person name="Musso T."/>
            <person name="Johnston J.A."/>
            <person name="Linnekin D."/>
            <person name="Varesio L."/>
            <person name="Rowe T.K."/>
            <person name="O'Shea J.J."/>
            <person name="McVicar D.W."/>
        </authorList>
    </citation>
    <scope>TISSUE SPECIFICITY</scope>
</reference>
<reference key="12">
    <citation type="journal article" date="2000" name="FEBS Lett.">
        <title>STAM2, a new member of the STAM family, binding to the Janus kinases.</title>
        <authorList>
            <person name="Endo K."/>
            <person name="Takeshita T."/>
            <person name="Kasai H."/>
            <person name="Sasaki Y."/>
            <person name="Tanaka N."/>
            <person name="Asao H."/>
            <person name="Kikuchi K."/>
            <person name="Yamada M."/>
            <person name="Chenb M."/>
            <person name="O'Shea J.J."/>
            <person name="Sugamura K."/>
        </authorList>
    </citation>
    <scope>INTERACTION WITH STAM2</scope>
    <source>
        <tissue>Fetal brain</tissue>
    </source>
</reference>
<reference key="13">
    <citation type="journal article" date="2002" name="Biochem. Biophys. Res. Commun.">
        <title>IL-2 receptor signaling through the Shb adapter protein in T and NK cells.</title>
        <authorList>
            <person name="Lindholm C.K."/>
        </authorList>
    </citation>
    <scope>INTERACTION WITH SHB</scope>
</reference>
<reference key="14">
    <citation type="journal article" date="2002" name="Curr. Biol.">
        <title>The T cell protein tyrosine phosphatase is a negative regulator of janus family kinases 1 and 3.</title>
        <authorList>
            <person name="Simoncic P.D."/>
            <person name="Lee-Loy A."/>
            <person name="Barber D.L."/>
            <person name="Tremblay M.L."/>
            <person name="McGlade C.J."/>
        </authorList>
    </citation>
    <scope>FUNCTION IN CYTOKINE SIGNALING</scope>
    <scope>PHOSPHORYLATION</scope>
    <scope>DEPHOSPHORYLATION AT TYR-980 AND TYR-981 BY PTPN2</scope>
</reference>
<reference key="15">
    <citation type="journal article" date="2002" name="J. Biol. Chem.">
        <title>The pseudokinase domain is required for suppression of basal activity of Jak2 and Jak3 tyrosine kinases and for cytokine-inducible activation of signal transduction.</title>
        <authorList>
            <person name="Saharinen P."/>
            <person name="Silvennoinen O."/>
        </authorList>
    </citation>
    <scope>DOMAIN</scope>
</reference>
<reference key="16">
    <citation type="journal article" date="2004" name="Mol. Cell. Biol.">
        <title>Tyrosine 813 is a site of JAK2 autophosphorylation critical for activation of JAK2 by SH2-B beta.</title>
        <authorList>
            <person name="Kurzer J.H."/>
            <person name="Argetsinger L.S."/>
            <person name="Zhou Y.J."/>
            <person name="Kouadio J.L."/>
            <person name="O'Shea J.J."/>
            <person name="Carter-Su C."/>
        </authorList>
    </citation>
    <scope>PHOSPHORYLATION AT TYR-785</scope>
    <scope>MUTAGENESIS OF TYR-785</scope>
</reference>
<reference key="17">
    <citation type="journal article" date="2005" name="Nat. Biotechnol.">
        <title>Immunoaffinity profiling of tyrosine phosphorylation in cancer cells.</title>
        <authorList>
            <person name="Rush J."/>
            <person name="Moritz A."/>
            <person name="Lee K.A."/>
            <person name="Guo A."/>
            <person name="Goss V.L."/>
            <person name="Spek E.J."/>
            <person name="Zhang H."/>
            <person name="Zha X.-M."/>
            <person name="Polakiewicz R.D."/>
            <person name="Comb M.J."/>
        </authorList>
    </citation>
    <scope>IDENTIFICATION BY MASS SPECTROMETRY [LARGE SCALE ANALYSIS]</scope>
</reference>
<reference key="18">
    <citation type="journal article" date="2008" name="Mol. Cell. Biol.">
        <title>Phosphorylation of human Jak3 at tyrosines 904 and 939 positively regulates its activity.</title>
        <authorList>
            <person name="Cheng H."/>
            <person name="Ross J.A."/>
            <person name="Frost J.A."/>
            <person name="Kirken R.A."/>
        </authorList>
    </citation>
    <scope>PHOSPHORYLATION AT TYR-904 AND TYR-939</scope>
    <scope>MUTAGENESIS OF LYS-855; TYR-904 AND TYR-939</scope>
</reference>
<reference key="19">
    <citation type="journal article" date="2009" name="Immunol. Rev.">
        <title>Janus kinases in immune cell signaling.</title>
        <authorList>
            <person name="Ghoreschi K."/>
            <person name="Laurence A."/>
            <person name="O'Shea J.J."/>
        </authorList>
    </citation>
    <scope>REVIEW ON FUNCTION</scope>
</reference>
<reference key="20">
    <citation type="journal article" date="2009" name="Mol. Cell. Proteomics">
        <title>Large-scale proteomics analysis of the human kinome.</title>
        <authorList>
            <person name="Oppermann F.S."/>
            <person name="Gnad F."/>
            <person name="Olsen J.V."/>
            <person name="Hornberger R."/>
            <person name="Greff Z."/>
            <person name="Keri G."/>
            <person name="Mann M."/>
            <person name="Daub H."/>
        </authorList>
    </citation>
    <scope>IDENTIFICATION BY MASS SPECTROMETRY [LARGE SCALE ANALYSIS]</scope>
</reference>
<reference key="21">
    <citation type="journal article" date="2009" name="Sci. Signal.">
        <title>Quantitative phosphoproteomic analysis of T cell receptor signaling reveals system-wide modulation of protein-protein interactions.</title>
        <authorList>
            <person name="Mayya V."/>
            <person name="Lundgren D.H."/>
            <person name="Hwang S.-I."/>
            <person name="Rezaul K."/>
            <person name="Wu L."/>
            <person name="Eng J.K."/>
            <person name="Rodionov V."/>
            <person name="Han D.K."/>
        </authorList>
    </citation>
    <scope>IDENTIFICATION BY MASS SPECTROMETRY [LARGE SCALE ANALYSIS]</scope>
    <source>
        <tissue>Leukemic T-cell</tissue>
    </source>
</reference>
<reference key="22">
    <citation type="journal article" date="2010" name="J. Clin. Invest.">
        <title>IL-15 triggers an antiapoptotic pathway in human intraepithelial lymphocytes that is a potential new target in celiac disease-associated inflammation and lymphomagenesis.</title>
        <authorList>
            <person name="Malamut G."/>
            <person name="El Machhour R."/>
            <person name="Montcuquet N."/>
            <person name="Martin-Lanneree S."/>
            <person name="Dusanter-Fourt I."/>
            <person name="Verkarre V."/>
            <person name="Mention J.J."/>
            <person name="Rahmi G."/>
            <person name="Kiyono H."/>
            <person name="Butz E.A."/>
            <person name="Brousse N."/>
            <person name="Cellier C."/>
            <person name="Cerf-Bensussan N."/>
            <person name="Meresse B."/>
        </authorList>
    </citation>
    <scope>FUNCTION IN IL15 SIGNALING PATHWAY</scope>
</reference>
<reference key="23">
    <citation type="journal article" date="2005" name="Blood">
        <title>Crystal structure of the Jak3 kinase domain in complex with a staurosporine analog.</title>
        <authorList>
            <person name="Boggon T.J."/>
            <person name="Li Y."/>
            <person name="Manley P.W."/>
            <person name="Eck M.J."/>
        </authorList>
    </citation>
    <scope>X-RAY CRYSTALLOGRAPHY (2.55 ANGSTROMS) OF 814-1103 IN COMPLEX WITH STAUROSPORINE ANALOG AFN941</scope>
    <scope>PHOSPHORYLATION AT TYR-980 AND TYR-981</scope>
</reference>
<reference key="24">
    <citation type="journal article" date="1995" name="Nature">
        <title>Mutations of Jak-3 gene in patients with autosomal severe combined immune deficiency (SCID).</title>
        <authorList>
            <person name="Macchi P."/>
            <person name="Villa A."/>
            <person name="Giliani S."/>
            <person name="Sacco M.G."/>
            <person name="Frattini A."/>
            <person name="Porta F."/>
            <person name="Ugazio A.G."/>
            <person name="Johnston J.A."/>
            <person name="Candotti F."/>
            <person name="O'Shea J.J."/>
            <person name="Vezzoni P."/>
            <person name="Notarangelo L.D."/>
        </authorList>
    </citation>
    <scope>VARIANT T(-)B(+)NK(-) SCID CYS-100</scope>
</reference>
<reference key="25">
    <citation type="journal article" date="1997" name="Blood">
        <title>Structural and functional basis for JAK3-deficient severe combined immunodeficiency.</title>
        <authorList>
            <person name="Candotti F."/>
            <person name="Oakes S.A."/>
            <person name="Johnston J.A."/>
            <person name="Giliani S."/>
            <person name="Schumacher R.F."/>
            <person name="Mella P."/>
            <person name="Fiorini M."/>
            <person name="Ugazio A.G."/>
            <person name="Badolato R."/>
            <person name="Notarangelo L.D."/>
            <person name="Bozzi F."/>
            <person name="Macchi P."/>
            <person name="Strina D."/>
            <person name="Vezzoni P."/>
            <person name="Blaese R.M."/>
            <person name="O'Shea J.J."/>
            <person name="Villa A."/>
        </authorList>
    </citation>
    <scope>VARIANTS T(-)B(+)NK(-) SCID GLY-481; 586-LEU--MET-592 DEL AND ARG-759</scope>
</reference>
<reference key="26">
    <citation type="journal article" date="1998" name="Br. J. Haematol.">
        <title>Molecular and biochemical characterization of JAK3 deficiency in a patient with severe combined immunodeficiency over 20 years after bone marrow transplantation: implications for treatment.</title>
        <authorList>
            <person name="Bozzi F."/>
            <person name="Lefranc G."/>
            <person name="Villa A."/>
            <person name="Badolato R."/>
            <person name="Schumacher R.F."/>
            <person name="Khalil G."/>
            <person name="Loiselet J."/>
            <person name="Bresciani S."/>
            <person name="O'Shea J.J."/>
            <person name="Vezzoni P."/>
            <person name="Notarangelo L.D."/>
            <person name="Candotti F."/>
        </authorList>
    </citation>
    <scope>VARIANT T(-)B(+)NK(-) SCID TRP-582</scope>
</reference>
<reference key="27">
    <citation type="journal article" date="2000" name="Hum. Genet.">
        <title>Complete genomic organization of the human JAK3 gene and mutation analysis in severe combined immunodeficiency by single-strand conformation polymorphism.</title>
        <authorList>
            <person name="Schumacher R.F."/>
            <person name="Mella P."/>
            <person name="Badolato R."/>
            <person name="Fiorini M."/>
            <person name="Savoldi G."/>
            <person name="Giliani S."/>
            <person name="Villa A."/>
            <person name="Candotti F."/>
            <person name="Tampalini A."/>
            <person name="O'Shea J.J."/>
            <person name="Notarangelo L.D."/>
        </authorList>
    </citation>
    <scope>VARIANTS T(-)B(+)NK(-) SCID ARG-151 AND SER-910</scope>
    <scope>VARIANT ILE-722</scope>
</reference>
<reference key="28">
    <citation type="journal article" date="2004" name="Blood">
        <title>Janus kinase 3 (JAK3) deficiency: clinical, immunologic, and molecular analyses of 10 patients and outcomes of stem cell transplantation.</title>
        <authorList>
            <person name="Roberts J.L."/>
            <person name="Lengi A."/>
            <person name="Brown S.M."/>
            <person name="Chen M."/>
            <person name="Zhou Y.-J."/>
            <person name="O'Shea J.J."/>
            <person name="Buckley R.H."/>
        </authorList>
    </citation>
    <scope>VARIANTS T(-)B(+)NK(-) SCID ALA-58 DEL; GLU-169 AND SER-589</scope>
    <scope>VARIANT ILE-722</scope>
</reference>
<reference key="29">
    <citation type="journal article" date="2007" name="Nature">
        <title>Patterns of somatic mutation in human cancer genomes.</title>
        <authorList>
            <person name="Greenman C."/>
            <person name="Stephens P."/>
            <person name="Smith R."/>
            <person name="Dalgliesh G.L."/>
            <person name="Hunter C."/>
            <person name="Bignell G."/>
            <person name="Davies H."/>
            <person name="Teague J."/>
            <person name="Butler A."/>
            <person name="Stevens C."/>
            <person name="Edkins S."/>
            <person name="O'Meara S."/>
            <person name="Vastrik I."/>
            <person name="Schmidt E.E."/>
            <person name="Avis T."/>
            <person name="Barthorpe S."/>
            <person name="Bhamra G."/>
            <person name="Buck G."/>
            <person name="Choudhury B."/>
            <person name="Clements J."/>
            <person name="Cole J."/>
            <person name="Dicks E."/>
            <person name="Forbes S."/>
            <person name="Gray K."/>
            <person name="Halliday K."/>
            <person name="Harrison R."/>
            <person name="Hills K."/>
            <person name="Hinton J."/>
            <person name="Jenkinson A."/>
            <person name="Jones D."/>
            <person name="Menzies A."/>
            <person name="Mironenko T."/>
            <person name="Perry J."/>
            <person name="Raine K."/>
            <person name="Richardson D."/>
            <person name="Shepherd R."/>
            <person name="Small A."/>
            <person name="Tofts C."/>
            <person name="Varian J."/>
            <person name="Webb T."/>
            <person name="West S."/>
            <person name="Widaa S."/>
            <person name="Yates A."/>
            <person name="Cahill D.P."/>
            <person name="Louis D.N."/>
            <person name="Goldstraw P."/>
            <person name="Nicholson A.G."/>
            <person name="Brasseur F."/>
            <person name="Looijenga L."/>
            <person name="Weber B.L."/>
            <person name="Chiew Y.-E."/>
            <person name="DeFazio A."/>
            <person name="Greaves M.F."/>
            <person name="Green A.R."/>
            <person name="Campbell P."/>
            <person name="Birney E."/>
            <person name="Easton D.F."/>
            <person name="Chenevix-Trench G."/>
            <person name="Tan M.-H."/>
            <person name="Khoo S.K."/>
            <person name="Teh B.T."/>
            <person name="Yuen S.T."/>
            <person name="Leung S.Y."/>
            <person name="Wooster R."/>
            <person name="Futreal P.A."/>
            <person name="Stratton M.R."/>
        </authorList>
    </citation>
    <scope>VARIANTS [LARGE SCALE ANALYSIS] LEU-12; HIS-40; THR-132; ARG-151; VAL-521; PRO-527; PHE-688 AND ILE-722</scope>
</reference>
<name>JAK3_HUMAN</name>
<proteinExistence type="evidence at protein level"/>
<feature type="chain" id="PRO_0000088115" description="Tyrosine-protein kinase JAK3">
    <location>
        <begin position="1"/>
        <end position="1124"/>
    </location>
</feature>
<feature type="domain" description="FERM" evidence="3">
    <location>
        <begin position="24"/>
        <end position="356"/>
    </location>
</feature>
<feature type="domain" description="SH2; atypical">
    <location>
        <begin position="375"/>
        <end position="475"/>
    </location>
</feature>
<feature type="domain" description="Protein kinase 1" evidence="4">
    <location>
        <begin position="521"/>
        <end position="781"/>
    </location>
</feature>
<feature type="domain" description="Protein kinase 2" evidence="4">
    <location>
        <begin position="822"/>
        <end position="1111"/>
    </location>
</feature>
<feature type="region of interest" description="Interaction with cytokine/interferon/growth hormone receptors" evidence="1">
    <location>
        <begin position="1"/>
        <end position="223"/>
    </location>
</feature>
<feature type="active site" description="Proton acceptor" evidence="4 5">
    <location>
        <position position="949"/>
    </location>
</feature>
<feature type="binding site" evidence="4">
    <location>
        <begin position="828"/>
        <end position="836"/>
    </location>
    <ligand>
        <name>ATP</name>
        <dbReference type="ChEBI" id="CHEBI:30616"/>
    </ligand>
</feature>
<feature type="binding site" evidence="4">
    <location>
        <position position="855"/>
    </location>
    <ligand>
        <name>ATP</name>
        <dbReference type="ChEBI" id="CHEBI:30616"/>
    </ligand>
</feature>
<feature type="modified residue" description="Phosphoserine" evidence="2">
    <location>
        <position position="17"/>
    </location>
</feature>
<feature type="modified residue" description="Phosphotyrosine; by autocatalysis" evidence="12">
    <location>
        <position position="785"/>
    </location>
</feature>
<feature type="modified residue" description="Phosphotyrosine" evidence="15">
    <location>
        <position position="904"/>
    </location>
</feature>
<feature type="modified residue" description="Phosphotyrosine" evidence="15">
    <location>
        <position position="939"/>
    </location>
</feature>
<feature type="modified residue" description="Phosphotyrosine; by autocatalysis" evidence="13">
    <location>
        <position position="980"/>
    </location>
</feature>
<feature type="modified residue" description="Phosphotyrosine; by autocatalysis" evidence="13">
    <location>
        <position position="981"/>
    </location>
</feature>
<feature type="splice variant" id="VSP_054165" description="In isoform 3." evidence="24">
    <original>TMVQEFVHLGAIDMYLRKRGHLV</original>
    <variation>ESPPPTHPTPASPKSRLFFPPLF</variation>
    <location>
        <begin position="597"/>
        <end position="619"/>
    </location>
</feature>
<feature type="splice variant" id="VSP_054166" description="In isoform 3." evidence="24">
    <location>
        <begin position="620"/>
        <end position="1124"/>
    </location>
</feature>
<feature type="splice variant" id="VSP_004989" description="In isoform 1." evidence="25">
    <original>HELMKLCWAPSPQDRPSFSALGPQLDMLWSGSRGCETHAFTAHPEGKHHSLSFS</original>
    <variation>SAAGLASVSQSVDWAGVSGKPAGA</variation>
    <location>
        <begin position="1071"/>
        <end position="1124"/>
    </location>
</feature>
<feature type="sequence variant" id="VAR_041722" description="In dbSNP:rs56061056." evidence="14">
    <original>P</original>
    <variation>L</variation>
    <location>
        <position position="12"/>
    </location>
</feature>
<feature type="sequence variant" id="VAR_041723" description="In dbSNP:rs56384680." evidence="14">
    <original>R</original>
    <variation>H</variation>
    <location>
        <position position="40"/>
    </location>
</feature>
<feature type="sequence variant" id="VAR_019337" description="In T(-)B(+)NK(-) SCID." evidence="11">
    <location>
        <position position="58"/>
    </location>
</feature>
<feature type="sequence variant" id="VAR_006284" description="In T(-)B(+)NK(-) SCID; dbSNP:rs137852624." evidence="18">
    <original>Y</original>
    <variation>C</variation>
    <location>
        <position position="100"/>
    </location>
</feature>
<feature type="sequence variant" id="VAR_019336" description="In dbSNP:rs3212723." evidence="14 23">
    <original>P</original>
    <variation>T</variation>
    <location>
        <position position="132"/>
    </location>
</feature>
<feature type="sequence variant" id="VAR_010492" description="In T(-)B(+)NK(-) SCID; likely benign; dbSNP:rs55778349." evidence="7 14">
    <original>P</original>
    <variation>R</variation>
    <location>
        <position position="151"/>
    </location>
</feature>
<feature type="sequence variant" id="VAR_019338" description="In T(-)B(+)NK(-) SCID; dbSNP:rs147181709." evidence="11">
    <original>D</original>
    <variation>E</variation>
    <location>
        <position position="169"/>
    </location>
</feature>
<feature type="sequence variant" id="VAR_010493" description="In T(-)B(+)NK(-) SCID." evidence="21">
    <original>E</original>
    <variation>G</variation>
    <location>
        <position position="481"/>
    </location>
</feature>
<feature type="sequence variant" id="VAR_041724" description="In dbSNP:rs55666418." evidence="14">
    <original>L</original>
    <variation>V</variation>
    <location>
        <position position="521"/>
    </location>
</feature>
<feature type="sequence variant" id="VAR_041725" description="In a gastric adenocarcinoma sample; somatic mutation." evidence="14">
    <original>L</original>
    <variation>P</variation>
    <location>
        <position position="527"/>
    </location>
</feature>
<feature type="sequence variant" id="VAR_010494" description="In T(-)B(+)NK(-) SCID; dbSNP:rs193922361." evidence="22">
    <original>R</original>
    <variation>W</variation>
    <location>
        <position position="582"/>
    </location>
</feature>
<feature type="sequence variant" id="VAR_010495" description="In T(-)B(+)NK(-) SCID; lack of phosphorylation in response to cytokine stimulation." evidence="21">
    <location>
        <begin position="586"/>
        <end position="592"/>
    </location>
</feature>
<feature type="sequence variant" id="VAR_019339" description="In T(-)B(+)NK(-) SCID; dbSNP:rs886039394." evidence="11">
    <original>G</original>
    <variation>S</variation>
    <location>
        <position position="589"/>
    </location>
</feature>
<feature type="sequence variant" id="VAR_041726" description="In dbSNP:rs35785705." evidence="14">
    <original>I</original>
    <variation>F</variation>
    <location>
        <position position="688"/>
    </location>
</feature>
<feature type="sequence variant" id="VAR_010496" description="In dbSNP:rs3213409." evidence="7 11 14 23">
    <original>V</original>
    <variation>I</variation>
    <location>
        <position position="722"/>
    </location>
</feature>
<feature type="sequence variant" id="VAR_010497" description="In T(-)B(+)NK(-) SCID; constitutive phosphorylation." evidence="21">
    <original>C</original>
    <variation>R</variation>
    <location>
        <position position="759"/>
    </location>
</feature>
<feature type="sequence variant" id="VAR_010498" description="In T(-)B(+)NK(-) SCID." evidence="7">
    <original>L</original>
    <variation>S</variation>
    <location>
        <position position="910"/>
    </location>
</feature>
<feature type="mutagenesis site" description="Strong decrease of JAK3 phosphorylation." evidence="12">
    <original>Y</original>
    <variation>F</variation>
    <location>
        <position position="785"/>
    </location>
</feature>
<feature type="mutagenesis site" description="More than 90% loss of STAT5a activation." evidence="15">
    <original>K</original>
    <variation>A</variation>
    <location>
        <position position="855"/>
    </location>
</feature>
<feature type="mutagenesis site" description="About 40% loss of STAT5a activation." evidence="15">
    <original>Y</original>
    <variation>F</variation>
    <location>
        <position position="904"/>
    </location>
</feature>
<feature type="mutagenesis site" description="About 80% loss of STAT5a activation." evidence="15">
    <original>Y</original>
    <variation>F</variation>
    <location>
        <position position="939"/>
    </location>
</feature>
<feature type="sequence conflict" description="In Ref. 1; AAA19626." evidence="26" ref="1">
    <original>G</original>
    <variation>A</variation>
    <location>
        <position position="34"/>
    </location>
</feature>
<feature type="sequence conflict" description="In Ref. 3; AAC50950." evidence="26" ref="3">
    <original>F</original>
    <variation>S</variation>
    <location>
        <position position="45"/>
    </location>
</feature>
<feature type="sequence conflict" description="In Ref. 3; AAC50950." evidence="26" ref="3">
    <original>R</original>
    <variation>RS</variation>
    <location>
        <position position="103"/>
    </location>
</feature>
<feature type="sequence conflict" description="In Ref. 8; AAC50542." evidence="26" ref="8">
    <location>
        <position position="147"/>
    </location>
</feature>
<feature type="sequence conflict" description="In Ref. 8; AAC50542." evidence="26" ref="8">
    <original>T</original>
    <variation>A</variation>
    <location>
        <position position="187"/>
    </location>
</feature>
<feature type="sequence conflict" description="In Ref. 1; AAA19626 and 3; AAC50950." evidence="26" ref="1 3">
    <original>R</original>
    <variation>A</variation>
    <location>
        <position position="212"/>
    </location>
</feature>
<feature type="sequence conflict" description="In Ref. 1; AAA19626 and 3; AAC50950." evidence="26" ref="1 3">
    <original>R</original>
    <variation>P</variation>
    <location>
        <position position="222"/>
    </location>
</feature>
<feature type="sequence conflict" description="In Ref. 3; AAC50950." evidence="26" ref="3">
    <original>L</original>
    <variation>F</variation>
    <location>
        <position position="271"/>
    </location>
</feature>
<feature type="sequence conflict" description="In Ref. 3; AAC50950." evidence="26" ref="3">
    <location>
        <position position="287"/>
    </location>
</feature>
<feature type="sequence conflict" description="In Ref. 2; AAC50226." evidence="26" ref="2">
    <original>M</original>
    <variation>I</variation>
    <location>
        <position position="610"/>
    </location>
</feature>
<feature type="sequence conflict" description="In Ref. 1; AAA19626." evidence="26" ref="1">
    <original>GD</original>
    <variation>AH</variation>
    <location>
        <begin position="845"/>
        <end position="846"/>
    </location>
</feature>
<feature type="sequence conflict" description="In Ref. 3; AAC50950." evidence="26" ref="3">
    <original>RQS</original>
    <variation>EPE</variation>
    <location>
        <begin position="895"/>
        <end position="897"/>
    </location>
</feature>
<feature type="sequence conflict" description="In Ref. 1; AAA19626." evidence="26" ref="1">
    <original>QS</original>
    <variation>PE</variation>
    <location>
        <begin position="896"/>
        <end position="897"/>
    </location>
</feature>
<feature type="strand" evidence="34">
    <location>
        <begin position="816"/>
        <end position="818"/>
    </location>
</feature>
<feature type="helix" evidence="34">
    <location>
        <begin position="819"/>
        <end position="821"/>
    </location>
</feature>
<feature type="strand" evidence="34">
    <location>
        <begin position="822"/>
        <end position="830"/>
    </location>
</feature>
<feature type="strand" evidence="34">
    <location>
        <begin position="832"/>
        <end position="841"/>
    </location>
</feature>
<feature type="strand" evidence="34">
    <location>
        <begin position="845"/>
        <end position="847"/>
    </location>
</feature>
<feature type="strand" evidence="34">
    <location>
        <begin position="849"/>
        <end position="859"/>
    </location>
</feature>
<feature type="helix" evidence="34">
    <location>
        <begin position="862"/>
        <end position="877"/>
    </location>
</feature>
<feature type="strand" evidence="34">
    <location>
        <begin position="886"/>
        <end position="891"/>
    </location>
</feature>
<feature type="strand" evidence="34">
    <location>
        <begin position="893"/>
        <end position="896"/>
    </location>
</feature>
<feature type="strand" evidence="34">
    <location>
        <begin position="898"/>
        <end position="903"/>
    </location>
</feature>
<feature type="helix" evidence="34">
    <location>
        <begin position="910"/>
        <end position="917"/>
    </location>
</feature>
<feature type="helix" evidence="34">
    <location>
        <begin position="918"/>
        <end position="920"/>
    </location>
</feature>
<feature type="helix" evidence="34">
    <location>
        <begin position="923"/>
        <end position="942"/>
    </location>
</feature>
<feature type="helix" evidence="34">
    <location>
        <begin position="952"/>
        <end position="954"/>
    </location>
</feature>
<feature type="strand" evidence="34">
    <location>
        <begin position="955"/>
        <end position="959"/>
    </location>
</feature>
<feature type="strand" evidence="34">
    <location>
        <begin position="962"/>
        <end position="965"/>
    </location>
</feature>
<feature type="helix" evidence="32">
    <location>
        <begin position="968"/>
        <end position="970"/>
    </location>
</feature>
<feature type="strand" evidence="34">
    <location>
        <begin position="979"/>
        <end position="982"/>
    </location>
</feature>
<feature type="helix" evidence="34">
    <location>
        <begin position="991"/>
        <end position="993"/>
    </location>
</feature>
<feature type="helix" evidence="34">
    <location>
        <begin position="996"/>
        <end position="1001"/>
    </location>
</feature>
<feature type="strand" evidence="34">
    <location>
        <begin position="1003"/>
        <end position="1005"/>
    </location>
</feature>
<feature type="helix" evidence="34">
    <location>
        <begin position="1006"/>
        <end position="1021"/>
    </location>
</feature>
<feature type="turn" evidence="34">
    <location>
        <begin position="1022"/>
        <end position="1024"/>
    </location>
</feature>
<feature type="helix" evidence="34">
    <location>
        <begin position="1026"/>
        <end position="1028"/>
    </location>
</feature>
<feature type="helix" evidence="34">
    <location>
        <begin position="1030"/>
        <end position="1037"/>
    </location>
</feature>
<feature type="strand" evidence="33">
    <location>
        <begin position="1042"/>
        <end position="1044"/>
    </location>
</feature>
<feature type="helix" evidence="34">
    <location>
        <begin position="1046"/>
        <end position="1055"/>
    </location>
</feature>
<feature type="helix" evidence="34">
    <location>
        <begin position="1068"/>
        <end position="1077"/>
    </location>
</feature>
<feature type="helix" evidence="34">
    <location>
        <begin position="1082"/>
        <end position="1084"/>
    </location>
</feature>
<feature type="helix" evidence="34">
    <location>
        <begin position="1088"/>
        <end position="1102"/>
    </location>
</feature>
<keyword id="KW-0002">3D-structure</keyword>
<keyword id="KW-1064">Adaptive immunity</keyword>
<keyword id="KW-0025">Alternative splicing</keyword>
<keyword id="KW-0067">ATP-binding</keyword>
<keyword id="KW-0963">Cytoplasm</keyword>
<keyword id="KW-0225">Disease variant</keyword>
<keyword id="KW-0391">Immunity</keyword>
<keyword id="KW-0399">Innate immunity</keyword>
<keyword id="KW-0418">Kinase</keyword>
<keyword id="KW-0472">Membrane</keyword>
<keyword id="KW-0547">Nucleotide-binding</keyword>
<keyword id="KW-0597">Phosphoprotein</keyword>
<keyword id="KW-1267">Proteomics identification</keyword>
<keyword id="KW-1185">Reference proteome</keyword>
<keyword id="KW-0677">Repeat</keyword>
<keyword id="KW-0705">SCID</keyword>
<keyword id="KW-0727">SH2 domain</keyword>
<keyword id="KW-0808">Transferase</keyword>
<keyword id="KW-0829">Tyrosine-protein kinase</keyword>
<accession>P52333</accession>
<accession>Q13259</accession>
<accession>Q13260</accession>
<accession>Q13611</accession>
<accession>Q8N1E8</accession>
<accession>Q99699</accession>
<accession>Q9Y6S2</accession>
<dbReference type="EC" id="2.7.10.2"/>
<dbReference type="EMBL" id="U09607">
    <property type="protein sequence ID" value="AAA19626.1"/>
    <property type="molecule type" value="mRNA"/>
</dbReference>
<dbReference type="EMBL" id="U31601">
    <property type="protein sequence ID" value="AAC50226.1"/>
    <property type="molecule type" value="mRNA"/>
</dbReference>
<dbReference type="EMBL" id="U31602">
    <property type="protein sequence ID" value="AAC50227.1"/>
    <property type="status" value="ALT_SEQ"/>
    <property type="molecule type" value="mRNA"/>
</dbReference>
<dbReference type="EMBL" id="U70065">
    <property type="protein sequence ID" value="AAC50950.1"/>
    <property type="molecule type" value="Genomic_DNA"/>
</dbReference>
<dbReference type="EMBL" id="AF513860">
    <property type="protein sequence ID" value="AAM44860.1"/>
    <property type="molecule type" value="Genomic_DNA"/>
</dbReference>
<dbReference type="EMBL" id="AC007201">
    <property type="protein sequence ID" value="AAD22741.1"/>
    <property type="molecule type" value="Genomic_DNA"/>
</dbReference>
<dbReference type="EMBL" id="CH471106">
    <property type="protein sequence ID" value="EAW84639.1"/>
    <property type="molecule type" value="Genomic_DNA"/>
</dbReference>
<dbReference type="EMBL" id="BC028068">
    <property type="protein sequence ID" value="AAH28068.1"/>
    <property type="molecule type" value="mRNA"/>
</dbReference>
<dbReference type="EMBL" id="U57096">
    <property type="protein sequence ID" value="AAC50542.1"/>
    <property type="molecule type" value="mRNA"/>
</dbReference>
<dbReference type="CCDS" id="CCDS12366.1">
    <molecule id="P52333-1"/>
</dbReference>
<dbReference type="PIR" id="A55747">
    <property type="entry name" value="A55747"/>
</dbReference>
<dbReference type="RefSeq" id="NP_000206.2">
    <molecule id="P52333-1"/>
    <property type="nucleotide sequence ID" value="NM_000215.3"/>
</dbReference>
<dbReference type="RefSeq" id="XP_047294742.1">
    <molecule id="P52333-1"/>
    <property type="nucleotide sequence ID" value="XM_047438786.1"/>
</dbReference>
<dbReference type="RefSeq" id="XP_054176885.1">
    <molecule id="P52333-1"/>
    <property type="nucleotide sequence ID" value="XM_054320910.1"/>
</dbReference>
<dbReference type="PDB" id="1YVJ">
    <property type="method" value="X-ray"/>
    <property type="resolution" value="2.55 A"/>
    <property type="chains" value="A=814-1103"/>
</dbReference>
<dbReference type="PDB" id="3LXK">
    <property type="method" value="X-ray"/>
    <property type="resolution" value="2.00 A"/>
    <property type="chains" value="A=806-1124"/>
</dbReference>
<dbReference type="PDB" id="3LXL">
    <property type="method" value="X-ray"/>
    <property type="resolution" value="1.74 A"/>
    <property type="chains" value="A=806-1124"/>
</dbReference>
<dbReference type="PDB" id="3PJC">
    <property type="method" value="X-ray"/>
    <property type="resolution" value="2.20 A"/>
    <property type="chains" value="A=812-1124"/>
</dbReference>
<dbReference type="PDB" id="3ZC6">
    <property type="method" value="X-ray"/>
    <property type="resolution" value="2.42 A"/>
    <property type="chains" value="A/B/C/D=813-1100"/>
</dbReference>
<dbReference type="PDB" id="3ZEP">
    <property type="method" value="X-ray"/>
    <property type="resolution" value="2.35 A"/>
    <property type="chains" value="A/B/C/D=813-1047, A/B/C/D=813-1100"/>
</dbReference>
<dbReference type="PDB" id="4HVD">
    <property type="method" value="X-ray"/>
    <property type="resolution" value="1.85 A"/>
    <property type="chains" value="A=811-1124"/>
</dbReference>
<dbReference type="PDB" id="4HVG">
    <property type="method" value="X-ray"/>
    <property type="resolution" value="2.75 A"/>
    <property type="chains" value="A=811-1124"/>
</dbReference>
<dbReference type="PDB" id="4HVH">
    <property type="method" value="X-ray"/>
    <property type="resolution" value="2.30 A"/>
    <property type="chains" value="A=811-1124"/>
</dbReference>
<dbReference type="PDB" id="4HVI">
    <property type="method" value="X-ray"/>
    <property type="resolution" value="2.40 A"/>
    <property type="chains" value="A=811-1124"/>
</dbReference>
<dbReference type="PDB" id="4I6Q">
    <property type="method" value="X-ray"/>
    <property type="resolution" value="1.85 A"/>
    <property type="chains" value="A=811-1124"/>
</dbReference>
<dbReference type="PDB" id="4QPS">
    <property type="method" value="X-ray"/>
    <property type="resolution" value="1.80 A"/>
    <property type="chains" value="A/C=811-1103"/>
</dbReference>
<dbReference type="PDB" id="4QT1">
    <property type="method" value="X-ray"/>
    <property type="resolution" value="2.40 A"/>
    <property type="chains" value="A=811-1124"/>
</dbReference>
<dbReference type="PDB" id="4RIO">
    <property type="method" value="X-ray"/>
    <property type="resolution" value="2.69 A"/>
    <property type="chains" value="A=810-1100"/>
</dbReference>
<dbReference type="PDB" id="4V0G">
    <property type="method" value="X-ray"/>
    <property type="resolution" value="3.00 A"/>
    <property type="chains" value="A/B=816-1098"/>
</dbReference>
<dbReference type="PDB" id="4Z16">
    <property type="method" value="X-ray"/>
    <property type="resolution" value="2.90 A"/>
    <property type="chains" value="A/B/C/D=811-1124"/>
</dbReference>
<dbReference type="PDB" id="5LWM">
    <property type="method" value="X-ray"/>
    <property type="resolution" value="1.55 A"/>
    <property type="chains" value="A=812-1103"/>
</dbReference>
<dbReference type="PDB" id="5LWN">
    <property type="method" value="X-ray"/>
    <property type="resolution" value="1.60 A"/>
    <property type="chains" value="A=812-1103"/>
</dbReference>
<dbReference type="PDB" id="5TOZ">
    <property type="method" value="X-ray"/>
    <property type="resolution" value="1.98 A"/>
    <property type="chains" value="A=812-1124"/>
</dbReference>
<dbReference type="PDB" id="5TTS">
    <property type="method" value="X-ray"/>
    <property type="resolution" value="2.34 A"/>
    <property type="chains" value="A=812-1124"/>
</dbReference>
<dbReference type="PDB" id="5TTU">
    <property type="method" value="X-ray"/>
    <property type="resolution" value="1.72 A"/>
    <property type="chains" value="A=812-1124"/>
</dbReference>
<dbReference type="PDB" id="5TTV">
    <property type="method" value="X-ray"/>
    <property type="resolution" value="1.93 A"/>
    <property type="chains" value="A=812-1124"/>
</dbReference>
<dbReference type="PDB" id="5VO6">
    <property type="method" value="X-ray"/>
    <property type="resolution" value="2.65 A"/>
    <property type="chains" value="A=812-1100"/>
</dbReference>
<dbReference type="PDB" id="5W86">
    <property type="method" value="X-ray"/>
    <property type="resolution" value="2.61 A"/>
    <property type="chains" value="A/B/C/D=814-1100"/>
</dbReference>
<dbReference type="PDB" id="5WFJ">
    <property type="method" value="X-ray"/>
    <property type="resolution" value="2.48 A"/>
    <property type="chains" value="A=810-1100"/>
</dbReference>
<dbReference type="PDB" id="6AAK">
    <property type="method" value="X-ray"/>
    <property type="resolution" value="2.67 A"/>
    <property type="chains" value="A/B/C/D=814-1100"/>
</dbReference>
<dbReference type="PDB" id="6DA4">
    <property type="method" value="X-ray"/>
    <property type="resolution" value="2.90 A"/>
    <property type="chains" value="A=812-1124"/>
</dbReference>
<dbReference type="PDB" id="6DB3">
    <property type="method" value="X-ray"/>
    <property type="resolution" value="1.97 A"/>
    <property type="chains" value="A=812-1124"/>
</dbReference>
<dbReference type="PDB" id="6DB4">
    <property type="method" value="X-ray"/>
    <property type="resolution" value="1.66 A"/>
    <property type="chains" value="A=812-1124"/>
</dbReference>
<dbReference type="PDB" id="6DUD">
    <property type="method" value="X-ray"/>
    <property type="resolution" value="1.66 A"/>
    <property type="chains" value="A=812-1124"/>
</dbReference>
<dbReference type="PDB" id="6GL9">
    <property type="method" value="X-ray"/>
    <property type="resolution" value="1.70 A"/>
    <property type="chains" value="A/B=812-1103"/>
</dbReference>
<dbReference type="PDB" id="6GLA">
    <property type="method" value="X-ray"/>
    <property type="resolution" value="1.92 A"/>
    <property type="chains" value="A/B=812-1103"/>
</dbReference>
<dbReference type="PDB" id="6GLB">
    <property type="method" value="X-ray"/>
    <property type="resolution" value="2.00 A"/>
    <property type="chains" value="A/B=812-1103"/>
</dbReference>
<dbReference type="PDB" id="6HZV">
    <property type="method" value="X-ray"/>
    <property type="resolution" value="2.46 A"/>
    <property type="chains" value="A/B/C/D=815-1099"/>
</dbReference>
<dbReference type="PDB" id="6NY4">
    <property type="method" value="X-ray"/>
    <property type="resolution" value="2.33 A"/>
    <property type="chains" value="A=810-1100"/>
</dbReference>
<dbReference type="PDB" id="7APF">
    <property type="method" value="X-ray"/>
    <property type="resolution" value="1.95 A"/>
    <property type="chains" value="A/B=812-1103"/>
</dbReference>
<dbReference type="PDB" id="7APG">
    <property type="method" value="X-ray"/>
    <property type="resolution" value="2.40 A"/>
    <property type="chains" value="A/B/C/D=812-1103"/>
</dbReference>
<dbReference type="PDB" id="7C3N">
    <property type="method" value="X-ray"/>
    <property type="resolution" value="1.98 A"/>
    <property type="chains" value="A=812-1124"/>
</dbReference>
<dbReference type="PDB" id="7Q6H">
    <property type="method" value="X-ray"/>
    <property type="resolution" value="1.75 A"/>
    <property type="chains" value="AAA=806-1124"/>
</dbReference>
<dbReference type="PDB" id="7UYV">
    <property type="method" value="X-ray"/>
    <property type="resolution" value="2.15 A"/>
    <property type="chains" value="A/B/C/D=810-1100"/>
</dbReference>
<dbReference type="PDB" id="8EXM">
    <property type="method" value="X-ray"/>
    <property type="resolution" value="2.35 A"/>
    <property type="chains" value="D=973-988"/>
</dbReference>
<dbReference type="PDBsum" id="1YVJ"/>
<dbReference type="PDBsum" id="3LXK"/>
<dbReference type="PDBsum" id="3LXL"/>
<dbReference type="PDBsum" id="3PJC"/>
<dbReference type="PDBsum" id="3ZC6"/>
<dbReference type="PDBsum" id="3ZEP"/>
<dbReference type="PDBsum" id="4HVD"/>
<dbReference type="PDBsum" id="4HVG"/>
<dbReference type="PDBsum" id="4HVH"/>
<dbReference type="PDBsum" id="4HVI"/>
<dbReference type="PDBsum" id="4I6Q"/>
<dbReference type="PDBsum" id="4QPS"/>
<dbReference type="PDBsum" id="4QT1"/>
<dbReference type="PDBsum" id="4RIO"/>
<dbReference type="PDBsum" id="4V0G"/>
<dbReference type="PDBsum" id="4Z16"/>
<dbReference type="PDBsum" id="5LWM"/>
<dbReference type="PDBsum" id="5LWN"/>
<dbReference type="PDBsum" id="5TOZ"/>
<dbReference type="PDBsum" id="5TTS"/>
<dbReference type="PDBsum" id="5TTU"/>
<dbReference type="PDBsum" id="5TTV"/>
<dbReference type="PDBsum" id="5VO6"/>
<dbReference type="PDBsum" id="5W86"/>
<dbReference type="PDBsum" id="5WFJ"/>
<dbReference type="PDBsum" id="6AAK"/>
<dbReference type="PDBsum" id="6DA4"/>
<dbReference type="PDBsum" id="6DB3"/>
<dbReference type="PDBsum" id="6DB4"/>
<dbReference type="PDBsum" id="6DUD"/>
<dbReference type="PDBsum" id="6GL9"/>
<dbReference type="PDBsum" id="6GLA"/>
<dbReference type="PDBsum" id="6GLB"/>
<dbReference type="PDBsum" id="6HZV"/>
<dbReference type="PDBsum" id="6NY4"/>
<dbReference type="PDBsum" id="7APF"/>
<dbReference type="PDBsum" id="7APG"/>
<dbReference type="PDBsum" id="7C3N"/>
<dbReference type="PDBsum" id="7Q6H"/>
<dbReference type="PDBsum" id="7UYV"/>
<dbReference type="PDBsum" id="8EXM"/>
<dbReference type="SMR" id="P52333"/>
<dbReference type="BioGRID" id="109921">
    <property type="interactions" value="124"/>
</dbReference>
<dbReference type="CORUM" id="P52333"/>
<dbReference type="DIP" id="DIP-274N"/>
<dbReference type="FunCoup" id="P52333">
    <property type="interactions" value="855"/>
</dbReference>
<dbReference type="IntAct" id="P52333">
    <property type="interactions" value="87"/>
</dbReference>
<dbReference type="MINT" id="P52333"/>
<dbReference type="STRING" id="9606.ENSP00000432511"/>
<dbReference type="BindingDB" id="P52333"/>
<dbReference type="ChEMBL" id="CHEMBL2148"/>
<dbReference type="DrugBank" id="DB04716">
    <property type="generic name" value="2-tert-butyl-9-fluoro-1,6-dihydrobenzo[h]imidazo[4,5-f]isoquinolin-7-one"/>
</dbReference>
<dbReference type="DrugBank" id="DB14973">
    <property type="generic name" value="Abrocitinib"/>
</dbReference>
<dbReference type="DrugBank" id="DB11817">
    <property type="generic name" value="Baricitinib"/>
</dbReference>
<dbReference type="DrugBank" id="DB15499">
    <property type="generic name" value="Cerdulatinib"/>
</dbReference>
<dbReference type="DrugBank" id="DB12566">
    <property type="generic name" value="Decernotinib"/>
</dbReference>
<dbReference type="DrugBank" id="DB16133">
    <property type="generic name" value="Delgocitinib"/>
</dbReference>
<dbReference type="DrugBank" id="DB12010">
    <property type="generic name" value="Fostamatinib"/>
</dbReference>
<dbReference type="DrugBank" id="DB16191">
    <property type="generic name" value="Ifidancitinib"/>
</dbReference>
<dbReference type="DrugBank" id="DB11763">
    <property type="generic name" value="Momelotinib"/>
</dbReference>
<dbReference type="DrugBank" id="DB11697">
    <property type="generic name" value="Pacritinib"/>
</dbReference>
<dbReference type="DrugBank" id="DB11708">
    <property type="generic name" value="Peficitinib"/>
</dbReference>
<dbReference type="DrugBank" id="DB06321">
    <property type="generic name" value="R-348"/>
</dbReference>
<dbReference type="DrugBank" id="DB14924">
    <property type="generic name" value="Ritlecitinib"/>
</dbReference>
<dbReference type="DrugBank" id="DB08877">
    <property type="generic name" value="Ruxolitinib"/>
</dbReference>
<dbReference type="DrugBank" id="DB08895">
    <property type="generic name" value="Tofacitinib"/>
</dbReference>
<dbReference type="DrugBank" id="DB15035">
    <property type="generic name" value="Zanubrutinib"/>
</dbReference>
<dbReference type="DrugBank" id="DB17064">
    <property type="generic name" value="ZM-39923"/>
</dbReference>
<dbReference type="DrugCentral" id="P52333"/>
<dbReference type="GuidetoPHARMACOLOGY" id="2049"/>
<dbReference type="GlyGen" id="P52333">
    <property type="glycosylation" value="2 sites, 1 O-linked glycan (1 site)"/>
</dbReference>
<dbReference type="iPTMnet" id="P52333"/>
<dbReference type="PhosphoSitePlus" id="P52333"/>
<dbReference type="BioMuta" id="JAK3"/>
<dbReference type="DMDM" id="50403745"/>
<dbReference type="CPTAC" id="CPTAC-2905"/>
<dbReference type="CPTAC" id="CPTAC-2906"/>
<dbReference type="jPOST" id="P52333"/>
<dbReference type="MassIVE" id="P52333"/>
<dbReference type="PaxDb" id="9606-ENSP00000391676"/>
<dbReference type="PeptideAtlas" id="P52333"/>
<dbReference type="ProteomicsDB" id="56482">
    <molecule id="P52333-1"/>
</dbReference>
<dbReference type="ProteomicsDB" id="56483">
    <molecule id="P52333-2"/>
</dbReference>
<dbReference type="ProteomicsDB" id="71591"/>
<dbReference type="Antibodypedia" id="35352">
    <property type="antibodies" value="489 antibodies from 37 providers"/>
</dbReference>
<dbReference type="DNASU" id="3718"/>
<dbReference type="Ensembl" id="ENST00000458235.7">
    <molecule id="P52333-1"/>
    <property type="protein sequence ID" value="ENSP00000391676.1"/>
    <property type="gene ID" value="ENSG00000105639.21"/>
</dbReference>
<dbReference type="Ensembl" id="ENST00000527670.5">
    <molecule id="P52333-1"/>
    <property type="protein sequence ID" value="ENSP00000432511.1"/>
    <property type="gene ID" value="ENSG00000105639.21"/>
</dbReference>
<dbReference type="Ensembl" id="ENST00000534444.1">
    <molecule id="P52333-2"/>
    <property type="protein sequence ID" value="ENSP00000436421.1"/>
    <property type="gene ID" value="ENSG00000105639.21"/>
</dbReference>
<dbReference type="GeneID" id="3718"/>
<dbReference type="KEGG" id="hsa:3718"/>
<dbReference type="MANE-Select" id="ENST00000458235.7">
    <property type="protein sequence ID" value="ENSP00000391676.1"/>
    <property type="RefSeq nucleotide sequence ID" value="NM_000215.4"/>
    <property type="RefSeq protein sequence ID" value="NP_000206.2"/>
</dbReference>
<dbReference type="UCSC" id="uc002nhn.5">
    <molecule id="P52333-1"/>
    <property type="organism name" value="human"/>
</dbReference>
<dbReference type="AGR" id="HGNC:6193"/>
<dbReference type="CTD" id="3718"/>
<dbReference type="DisGeNET" id="3718"/>
<dbReference type="GeneCards" id="JAK3"/>
<dbReference type="HGNC" id="HGNC:6193">
    <property type="gene designation" value="JAK3"/>
</dbReference>
<dbReference type="HPA" id="ENSG00000105639">
    <property type="expression patterns" value="Tissue enhanced (lymphoid)"/>
</dbReference>
<dbReference type="MalaCards" id="JAK3"/>
<dbReference type="MIM" id="600173">
    <property type="type" value="gene"/>
</dbReference>
<dbReference type="MIM" id="600802">
    <property type="type" value="phenotype"/>
</dbReference>
<dbReference type="neXtProt" id="NX_P52333"/>
<dbReference type="OpenTargets" id="ENSG00000105639"/>
<dbReference type="Orphanet" id="35078">
    <property type="disease" value="T-B+ severe combined immunodeficiency due to JAK3 deficiency"/>
</dbReference>
<dbReference type="PharmGKB" id="PA29990"/>
<dbReference type="VEuPathDB" id="HostDB:ENSG00000105639"/>
<dbReference type="eggNOG" id="KOG0197">
    <property type="taxonomic scope" value="Eukaryota"/>
</dbReference>
<dbReference type="GeneTree" id="ENSGT00940000161827"/>
<dbReference type="HOGENOM" id="CLU_008155_1_0_1"/>
<dbReference type="InParanoid" id="P52333"/>
<dbReference type="OMA" id="MENQCHG"/>
<dbReference type="OrthoDB" id="1915767at2759"/>
<dbReference type="PAN-GO" id="P52333">
    <property type="GO annotations" value="10 GO annotations based on evolutionary models"/>
</dbReference>
<dbReference type="PhylomeDB" id="P52333"/>
<dbReference type="TreeFam" id="TF327041"/>
<dbReference type="BRENDA" id="2.7.10.2">
    <property type="organism ID" value="2681"/>
</dbReference>
<dbReference type="PathwayCommons" id="P52333"/>
<dbReference type="Reactome" id="R-HSA-1266695">
    <property type="pathway name" value="Interleukin-7 signaling"/>
</dbReference>
<dbReference type="Reactome" id="R-HSA-201556">
    <property type="pathway name" value="Signaling by ALK"/>
</dbReference>
<dbReference type="Reactome" id="R-HSA-5673001">
    <property type="pathway name" value="RAF/MAP kinase cascade"/>
</dbReference>
<dbReference type="Reactome" id="R-HSA-6785807">
    <property type="pathway name" value="Interleukin-4 and Interleukin-13 signaling"/>
</dbReference>
<dbReference type="Reactome" id="R-HSA-8854691">
    <property type="pathway name" value="Interleukin-20 family signaling"/>
</dbReference>
<dbReference type="Reactome" id="R-HSA-8983432">
    <property type="pathway name" value="Interleukin-15 signaling"/>
</dbReference>
<dbReference type="Reactome" id="R-HSA-8985947">
    <property type="pathway name" value="Interleukin-9 signaling"/>
</dbReference>
<dbReference type="Reactome" id="R-HSA-9020558">
    <property type="pathway name" value="Interleukin-2 signaling"/>
</dbReference>
<dbReference type="Reactome" id="R-HSA-9020958">
    <property type="pathway name" value="Interleukin-21 signaling"/>
</dbReference>
<dbReference type="Reactome" id="R-HSA-912526">
    <property type="pathway name" value="Interleukin receptor SHC signaling"/>
</dbReference>
<dbReference type="Reactome" id="R-HSA-9679191">
    <property type="pathway name" value="Potential therapeutics for SARS"/>
</dbReference>
<dbReference type="SignaLink" id="P52333"/>
<dbReference type="SIGNOR" id="P52333"/>
<dbReference type="BioGRID-ORCS" id="3718">
    <property type="hits" value="15 hits in 1191 CRISPR screens"/>
</dbReference>
<dbReference type="EvolutionaryTrace" id="P52333"/>
<dbReference type="GeneWiki" id="Janus_kinase_3"/>
<dbReference type="GenomeRNAi" id="3718"/>
<dbReference type="Pharos" id="P52333">
    <property type="development level" value="Tclin"/>
</dbReference>
<dbReference type="PRO" id="PR:P52333"/>
<dbReference type="Proteomes" id="UP000005640">
    <property type="component" value="Chromosome 19"/>
</dbReference>
<dbReference type="RNAct" id="P52333">
    <property type="molecule type" value="protein"/>
</dbReference>
<dbReference type="Bgee" id="ENSG00000105639">
    <property type="expression patterns" value="Expressed in granulocyte and 150 other cell types or tissues"/>
</dbReference>
<dbReference type="ExpressionAtlas" id="P52333">
    <property type="expression patterns" value="baseline and differential"/>
</dbReference>
<dbReference type="GO" id="GO:0009898">
    <property type="term" value="C:cytoplasmic side of plasma membrane"/>
    <property type="evidence" value="ECO:0000305"/>
    <property type="project" value="UniProt"/>
</dbReference>
<dbReference type="GO" id="GO:0005856">
    <property type="term" value="C:cytoskeleton"/>
    <property type="evidence" value="ECO:0007669"/>
    <property type="project" value="InterPro"/>
</dbReference>
<dbReference type="GO" id="GO:0005829">
    <property type="term" value="C:cytosol"/>
    <property type="evidence" value="ECO:0000318"/>
    <property type="project" value="GO_Central"/>
</dbReference>
<dbReference type="GO" id="GO:0005768">
    <property type="term" value="C:endosome"/>
    <property type="evidence" value="ECO:0000304"/>
    <property type="project" value="Reactome"/>
</dbReference>
<dbReference type="GO" id="GO:0031234">
    <property type="term" value="C:extrinsic component of cytoplasmic side of plasma membrane"/>
    <property type="evidence" value="ECO:0000314"/>
    <property type="project" value="UniProt"/>
</dbReference>
<dbReference type="GO" id="GO:0019897">
    <property type="term" value="C:extrinsic component of plasma membrane"/>
    <property type="evidence" value="ECO:0000305"/>
    <property type="project" value="UniProt"/>
</dbReference>
<dbReference type="GO" id="GO:0005886">
    <property type="term" value="C:plasma membrane"/>
    <property type="evidence" value="ECO:0000304"/>
    <property type="project" value="Reactome"/>
</dbReference>
<dbReference type="GO" id="GO:0005524">
    <property type="term" value="F:ATP binding"/>
    <property type="evidence" value="ECO:0007669"/>
    <property type="project" value="UniProtKB-KW"/>
</dbReference>
<dbReference type="GO" id="GO:0005131">
    <property type="term" value="F:growth hormone receptor binding"/>
    <property type="evidence" value="ECO:0000318"/>
    <property type="project" value="GO_Central"/>
</dbReference>
<dbReference type="GO" id="GO:0004715">
    <property type="term" value="F:non-membrane spanning protein tyrosine kinase activity"/>
    <property type="evidence" value="ECO:0000318"/>
    <property type="project" value="GO_Central"/>
</dbReference>
<dbReference type="GO" id="GO:0019903">
    <property type="term" value="F:protein phosphatase binding"/>
    <property type="evidence" value="ECO:0000353"/>
    <property type="project" value="UniProtKB"/>
</dbReference>
<dbReference type="GO" id="GO:0004713">
    <property type="term" value="F:protein tyrosine kinase activity"/>
    <property type="evidence" value="ECO:0000314"/>
    <property type="project" value="UniProt"/>
</dbReference>
<dbReference type="GO" id="GO:0002250">
    <property type="term" value="P:adaptive immune response"/>
    <property type="evidence" value="ECO:0007669"/>
    <property type="project" value="UniProtKB-KW"/>
</dbReference>
<dbReference type="GO" id="GO:0030183">
    <property type="term" value="P:B cell differentiation"/>
    <property type="evidence" value="ECO:0000250"/>
    <property type="project" value="BHF-UCL"/>
</dbReference>
<dbReference type="GO" id="GO:0030154">
    <property type="term" value="P:cell differentiation"/>
    <property type="evidence" value="ECO:0000318"/>
    <property type="project" value="GO_Central"/>
</dbReference>
<dbReference type="GO" id="GO:0007259">
    <property type="term" value="P:cell surface receptor signaling pathway via JAK-STAT"/>
    <property type="evidence" value="ECO:0000318"/>
    <property type="project" value="GO_Central"/>
</dbReference>
<dbReference type="GO" id="GO:0019221">
    <property type="term" value="P:cytokine-mediated signaling pathway"/>
    <property type="evidence" value="ECO:0000318"/>
    <property type="project" value="GO_Central"/>
</dbReference>
<dbReference type="GO" id="GO:0007167">
    <property type="term" value="P:enzyme-linked receptor protein signaling pathway"/>
    <property type="evidence" value="ECO:0000250"/>
    <property type="project" value="BHF-UCL"/>
</dbReference>
<dbReference type="GO" id="GO:0060397">
    <property type="term" value="P:growth hormone receptor signaling pathway via JAK-STAT"/>
    <property type="evidence" value="ECO:0000318"/>
    <property type="project" value="GO_Central"/>
</dbReference>
<dbReference type="GO" id="GO:0045087">
    <property type="term" value="P:innate immune response"/>
    <property type="evidence" value="ECO:0007669"/>
    <property type="project" value="UniProtKB-KW"/>
</dbReference>
<dbReference type="GO" id="GO:0035723">
    <property type="term" value="P:interleukin-15-mediated signaling pathway"/>
    <property type="evidence" value="ECO:0000314"/>
    <property type="project" value="UniProt"/>
</dbReference>
<dbReference type="GO" id="GO:0038110">
    <property type="term" value="P:interleukin-2-mediated signaling pathway"/>
    <property type="evidence" value="ECO:0000314"/>
    <property type="project" value="UniProt"/>
</dbReference>
<dbReference type="GO" id="GO:0035771">
    <property type="term" value="P:interleukin-4-mediated signaling pathway"/>
    <property type="evidence" value="ECO:0000314"/>
    <property type="project" value="BHF-UCL"/>
</dbReference>
<dbReference type="GO" id="GO:0038111">
    <property type="term" value="P:interleukin-7-mediated signaling pathway"/>
    <property type="evidence" value="ECO:0000314"/>
    <property type="project" value="UniProt"/>
</dbReference>
<dbReference type="GO" id="GO:0038113">
    <property type="term" value="P:interleukin-9-mediated signaling pathway"/>
    <property type="evidence" value="ECO:0000314"/>
    <property type="project" value="UniProt"/>
</dbReference>
<dbReference type="GO" id="GO:0035556">
    <property type="term" value="P:intracellular signal transduction"/>
    <property type="evidence" value="ECO:0000250"/>
    <property type="project" value="BHF-UCL"/>
</dbReference>
<dbReference type="GO" id="GO:0002731">
    <property type="term" value="P:negative regulation of dendritic cell cytokine production"/>
    <property type="evidence" value="ECO:0000250"/>
    <property type="project" value="BHF-UCL"/>
</dbReference>
<dbReference type="GO" id="GO:0010561">
    <property type="term" value="P:negative regulation of glycoprotein biosynthetic process"/>
    <property type="evidence" value="ECO:0000250"/>
    <property type="project" value="BHF-UCL"/>
</dbReference>
<dbReference type="GO" id="GO:0032693">
    <property type="term" value="P:negative regulation of interleukin-10 production"/>
    <property type="evidence" value="ECO:0000250"/>
    <property type="project" value="BHF-UCL"/>
</dbReference>
<dbReference type="GO" id="GO:0032695">
    <property type="term" value="P:negative regulation of interleukin-12 production"/>
    <property type="evidence" value="ECO:0000250"/>
    <property type="project" value="BHF-UCL"/>
</dbReference>
<dbReference type="GO" id="GO:0050868">
    <property type="term" value="P:negative regulation of T cell activation"/>
    <property type="evidence" value="ECO:0000250"/>
    <property type="project" value="BHF-UCL"/>
</dbReference>
<dbReference type="GO" id="GO:0045626">
    <property type="term" value="P:negative regulation of T-helper 1 cell differentiation"/>
    <property type="evidence" value="ECO:0000250"/>
    <property type="project" value="BHF-UCL"/>
</dbReference>
<dbReference type="GO" id="GO:2000329">
    <property type="term" value="P:negative regulation of T-helper 17 cell lineage commitment"/>
    <property type="evidence" value="ECO:0000314"/>
    <property type="project" value="UniProt"/>
</dbReference>
<dbReference type="GO" id="GO:0070244">
    <property type="term" value="P:negative regulation of thymocyte apoptotic process"/>
    <property type="evidence" value="ECO:0000250"/>
    <property type="project" value="BHF-UCL"/>
</dbReference>
<dbReference type="GO" id="GO:0042981">
    <property type="term" value="P:regulation of apoptotic process"/>
    <property type="evidence" value="ECO:0000318"/>
    <property type="project" value="GO_Central"/>
</dbReference>
<dbReference type="GO" id="GO:0046425">
    <property type="term" value="P:regulation of receptor signaling pathway via JAK-STAT"/>
    <property type="evidence" value="ECO:0000304"/>
    <property type="project" value="UniProtKB"/>
</dbReference>
<dbReference type="GO" id="GO:0070232">
    <property type="term" value="P:regulation of T cell apoptotic process"/>
    <property type="evidence" value="ECO:0000250"/>
    <property type="project" value="BHF-UCL"/>
</dbReference>
<dbReference type="GO" id="GO:0070672">
    <property type="term" value="P:response to interleukin-15"/>
    <property type="evidence" value="ECO:0000304"/>
    <property type="project" value="BHF-UCL"/>
</dbReference>
<dbReference type="GO" id="GO:0070669">
    <property type="term" value="P:response to interleukin-2"/>
    <property type="evidence" value="ECO:0000304"/>
    <property type="project" value="BHF-UCL"/>
</dbReference>
<dbReference type="GO" id="GO:0070670">
    <property type="term" value="P:response to interleukin-4"/>
    <property type="evidence" value="ECO:0000314"/>
    <property type="project" value="BHF-UCL"/>
</dbReference>
<dbReference type="GO" id="GO:0071104">
    <property type="term" value="P:response to interleukin-9"/>
    <property type="evidence" value="ECO:0000304"/>
    <property type="project" value="BHF-UCL"/>
</dbReference>
<dbReference type="GO" id="GO:0043029">
    <property type="term" value="P:T cell homeostasis"/>
    <property type="evidence" value="ECO:0000250"/>
    <property type="project" value="BHF-UCL"/>
</dbReference>
<dbReference type="GO" id="GO:0007260">
    <property type="term" value="P:tyrosine phosphorylation of STAT protein"/>
    <property type="evidence" value="ECO:0000304"/>
    <property type="project" value="UniProtKB"/>
</dbReference>
<dbReference type="CDD" id="cd14208">
    <property type="entry name" value="PTK_Jak3_rpt1"/>
    <property type="match status" value="1"/>
</dbReference>
<dbReference type="CDD" id="cd05081">
    <property type="entry name" value="PTKc_Jak3_rpt2"/>
    <property type="match status" value="1"/>
</dbReference>
<dbReference type="CDD" id="cd10380">
    <property type="entry name" value="SH2_Jak3"/>
    <property type="match status" value="1"/>
</dbReference>
<dbReference type="FunFam" id="1.10.510.10:FF:000110">
    <property type="entry name" value="Tyrosine-protein kinase"/>
    <property type="match status" value="1"/>
</dbReference>
<dbReference type="FunFam" id="3.30.200.20:FF:000084">
    <property type="entry name" value="Tyrosine-protein kinase"/>
    <property type="match status" value="1"/>
</dbReference>
<dbReference type="FunFam" id="3.30.200.20:FF:000135">
    <property type="entry name" value="Tyrosine-protein kinase"/>
    <property type="match status" value="1"/>
</dbReference>
<dbReference type="FunFam" id="3.30.505.10:FF:000073">
    <property type="entry name" value="Tyrosine-protein kinase"/>
    <property type="match status" value="1"/>
</dbReference>
<dbReference type="FunFam" id="1.10.510.10:FF:000114">
    <property type="entry name" value="Tyrosine-protein kinase JAK2"/>
    <property type="match status" value="1"/>
</dbReference>
<dbReference type="Gene3D" id="3.30.200.20">
    <property type="entry name" value="Phosphorylase Kinase, domain 1"/>
    <property type="match status" value="2"/>
</dbReference>
<dbReference type="Gene3D" id="2.30.29.30">
    <property type="entry name" value="Pleckstrin-homology domain (PH domain)/Phosphotyrosine-binding domain (PTB)"/>
    <property type="match status" value="1"/>
</dbReference>
<dbReference type="Gene3D" id="3.30.505.10">
    <property type="entry name" value="SH2 domain"/>
    <property type="match status" value="1"/>
</dbReference>
<dbReference type="Gene3D" id="1.10.510.10">
    <property type="entry name" value="Transferase(Phosphotransferase) domain 1"/>
    <property type="match status" value="2"/>
</dbReference>
<dbReference type="InterPro" id="IPR019749">
    <property type="entry name" value="Band_41_domain"/>
</dbReference>
<dbReference type="InterPro" id="IPR000299">
    <property type="entry name" value="FERM_domain"/>
</dbReference>
<dbReference type="InterPro" id="IPR041155">
    <property type="entry name" value="FERM_F1"/>
</dbReference>
<dbReference type="InterPro" id="IPR041046">
    <property type="entry name" value="FERM_F2"/>
</dbReference>
<dbReference type="InterPro" id="IPR051286">
    <property type="entry name" value="JAK"/>
</dbReference>
<dbReference type="InterPro" id="IPR041381">
    <property type="entry name" value="JAK1-3/TYK2_PHL_dom"/>
</dbReference>
<dbReference type="InterPro" id="IPR011009">
    <property type="entry name" value="Kinase-like_dom_sf"/>
</dbReference>
<dbReference type="InterPro" id="IPR011993">
    <property type="entry name" value="PH-like_dom_sf"/>
</dbReference>
<dbReference type="InterPro" id="IPR000719">
    <property type="entry name" value="Prot_kinase_dom"/>
</dbReference>
<dbReference type="InterPro" id="IPR017441">
    <property type="entry name" value="Protein_kinase_ATP_BS"/>
</dbReference>
<dbReference type="InterPro" id="IPR001245">
    <property type="entry name" value="Ser-Thr/Tyr_kinase_cat_dom"/>
</dbReference>
<dbReference type="InterPro" id="IPR000980">
    <property type="entry name" value="SH2"/>
</dbReference>
<dbReference type="InterPro" id="IPR036860">
    <property type="entry name" value="SH2_dom_sf"/>
</dbReference>
<dbReference type="InterPro" id="IPR008266">
    <property type="entry name" value="Tyr_kinase_AS"/>
</dbReference>
<dbReference type="InterPro" id="IPR020635">
    <property type="entry name" value="Tyr_kinase_cat_dom"/>
</dbReference>
<dbReference type="InterPro" id="IPR016251">
    <property type="entry name" value="Tyr_kinase_non-rcpt_Jak/Tyk2"/>
</dbReference>
<dbReference type="InterPro" id="IPR020775">
    <property type="entry name" value="Tyr_kinase_non-rcpt_Jak3"/>
</dbReference>
<dbReference type="PANTHER" id="PTHR45807">
    <property type="entry name" value="TYROSINE-PROTEIN KINASE HOPSCOTCH"/>
    <property type="match status" value="1"/>
</dbReference>
<dbReference type="PANTHER" id="PTHR45807:SF3">
    <property type="entry name" value="TYROSINE-PROTEIN KINASE JAK3"/>
    <property type="match status" value="1"/>
</dbReference>
<dbReference type="Pfam" id="PF18379">
    <property type="entry name" value="FERM_F1"/>
    <property type="match status" value="1"/>
</dbReference>
<dbReference type="Pfam" id="PF18377">
    <property type="entry name" value="FERM_F2"/>
    <property type="match status" value="1"/>
</dbReference>
<dbReference type="Pfam" id="PF17887">
    <property type="entry name" value="Jak1_Phl"/>
    <property type="match status" value="1"/>
</dbReference>
<dbReference type="Pfam" id="PF07714">
    <property type="entry name" value="PK_Tyr_Ser-Thr"/>
    <property type="match status" value="2"/>
</dbReference>
<dbReference type="Pfam" id="PF21990">
    <property type="entry name" value="SH2_1"/>
    <property type="match status" value="1"/>
</dbReference>
<dbReference type="PIRSF" id="PIRSF000636">
    <property type="entry name" value="TyrPK_Jak"/>
    <property type="match status" value="1"/>
</dbReference>
<dbReference type="PRINTS" id="PR01823">
    <property type="entry name" value="JANUSKINASE"/>
</dbReference>
<dbReference type="PRINTS" id="PR01826">
    <property type="entry name" value="JANUSKINASE3"/>
</dbReference>
<dbReference type="PRINTS" id="PR00109">
    <property type="entry name" value="TYRKINASE"/>
</dbReference>
<dbReference type="SMART" id="SM00295">
    <property type="entry name" value="B41"/>
    <property type="match status" value="1"/>
</dbReference>
<dbReference type="SMART" id="SM00252">
    <property type="entry name" value="SH2"/>
    <property type="match status" value="1"/>
</dbReference>
<dbReference type="SMART" id="SM00219">
    <property type="entry name" value="TyrKc"/>
    <property type="match status" value="2"/>
</dbReference>
<dbReference type="SUPFAM" id="SSF50729">
    <property type="entry name" value="PH domain-like"/>
    <property type="match status" value="1"/>
</dbReference>
<dbReference type="SUPFAM" id="SSF56112">
    <property type="entry name" value="Protein kinase-like (PK-like)"/>
    <property type="match status" value="2"/>
</dbReference>
<dbReference type="SUPFAM" id="SSF55550">
    <property type="entry name" value="SH2 domain"/>
    <property type="match status" value="1"/>
</dbReference>
<dbReference type="PROSITE" id="PS50057">
    <property type="entry name" value="FERM_3"/>
    <property type="match status" value="1"/>
</dbReference>
<dbReference type="PROSITE" id="PS00107">
    <property type="entry name" value="PROTEIN_KINASE_ATP"/>
    <property type="match status" value="1"/>
</dbReference>
<dbReference type="PROSITE" id="PS50011">
    <property type="entry name" value="PROTEIN_KINASE_DOM"/>
    <property type="match status" value="2"/>
</dbReference>
<dbReference type="PROSITE" id="PS00109">
    <property type="entry name" value="PROTEIN_KINASE_TYR"/>
    <property type="match status" value="1"/>
</dbReference>
<gene>
    <name evidence="31" type="primary">JAK3</name>
</gene>
<evidence type="ECO:0000250" key="1"/>
<evidence type="ECO:0000250" key="2">
    <source>
        <dbReference type="UniProtKB" id="Q62137"/>
    </source>
</evidence>
<evidence type="ECO:0000255" key="3">
    <source>
        <dbReference type="PROSITE-ProRule" id="PRU00084"/>
    </source>
</evidence>
<evidence type="ECO:0000255" key="4">
    <source>
        <dbReference type="PROSITE-ProRule" id="PRU00159"/>
    </source>
</evidence>
<evidence type="ECO:0000255" key="5">
    <source>
        <dbReference type="PROSITE-ProRule" id="PRU10028"/>
    </source>
</evidence>
<evidence type="ECO:0000269" key="6">
    <source>
    </source>
</evidence>
<evidence type="ECO:0000269" key="7">
    <source>
    </source>
</evidence>
<evidence type="ECO:0000269" key="8">
    <source>
    </source>
</evidence>
<evidence type="ECO:0000269" key="9">
    <source>
    </source>
</evidence>
<evidence type="ECO:0000269" key="10">
    <source>
    </source>
</evidence>
<evidence type="ECO:0000269" key="11">
    <source>
    </source>
</evidence>
<evidence type="ECO:0000269" key="12">
    <source>
    </source>
</evidence>
<evidence type="ECO:0000269" key="13">
    <source>
    </source>
</evidence>
<evidence type="ECO:0000269" key="14">
    <source>
    </source>
</evidence>
<evidence type="ECO:0000269" key="15">
    <source>
    </source>
</evidence>
<evidence type="ECO:0000269" key="16">
    <source>
    </source>
</evidence>
<evidence type="ECO:0000269" key="17">
    <source>
    </source>
</evidence>
<evidence type="ECO:0000269" key="18">
    <source>
    </source>
</evidence>
<evidence type="ECO:0000269" key="19">
    <source>
    </source>
</evidence>
<evidence type="ECO:0000269" key="20">
    <source>
    </source>
</evidence>
<evidence type="ECO:0000269" key="21">
    <source>
    </source>
</evidence>
<evidence type="ECO:0000269" key="22">
    <source>
    </source>
</evidence>
<evidence type="ECO:0000269" key="23">
    <source ref="4"/>
</evidence>
<evidence type="ECO:0000303" key="24">
    <source>
    </source>
</evidence>
<evidence type="ECO:0000303" key="25">
    <source>
    </source>
</evidence>
<evidence type="ECO:0000305" key="26"/>
<evidence type="ECO:0000305" key="27">
    <source>
    </source>
</evidence>
<evidence type="ECO:0000305" key="28">
    <source>
    </source>
</evidence>
<evidence type="ECO:0000305" key="29">
    <source>
    </source>
</evidence>
<evidence type="ECO:0000305" key="30">
    <source>
    </source>
</evidence>
<evidence type="ECO:0000312" key="31">
    <source>
        <dbReference type="HGNC" id="HGNC:6193"/>
    </source>
</evidence>
<evidence type="ECO:0007829" key="32">
    <source>
        <dbReference type="PDB" id="3LXL"/>
    </source>
</evidence>
<evidence type="ECO:0007829" key="33">
    <source>
        <dbReference type="PDB" id="4QPS"/>
    </source>
</evidence>
<evidence type="ECO:0007829" key="34">
    <source>
        <dbReference type="PDB" id="5LWM"/>
    </source>
</evidence>
<comment type="function">
    <text evidence="8 16 19 20">Non-receptor tyrosine kinase involved in various processes such as cell growth, development, or differentiation. Mediates essential signaling events in both innate and adaptive immunity and plays a crucial role in hematopoiesis during T-cells development. In the cytoplasm, plays a pivotal role in signal transduction via its association with type I receptors sharing the common subunit gamma such as IL2R, IL4R, IL7R, IL9R, IL15R and IL21R. Following ligand binding to cell surface receptors, phosphorylates specific tyrosine residues on the cytoplasmic tails of the receptor, creating docking sites for STATs proteins. Subsequently, phosphorylates the STATs proteins once they are recruited to the receptor. Phosphorylated STATs then form homodimer or heterodimers and translocate to the nucleus to activate gene transcription. For example, upon IL2R activation by IL2, JAK1 and JAK3 molecules bind to IL2R beta (IL2RB) and gamma chain (IL2RG) subunits inducing the tyrosine phosphorylation of both receptor subunits on their cytoplasmic domain. Then, STAT5A and STAT5B are recruited, phosphorylated and activated by JAK1 and JAK3. Once activated, dimerized STAT5 translocates to the nucleus and promotes the transcription of specific target genes in a cytokine-specific fashion.</text>
</comment>
<comment type="catalytic activity">
    <reaction evidence="5">
        <text>L-tyrosyl-[protein] + ATP = O-phospho-L-tyrosyl-[protein] + ADP + H(+)</text>
        <dbReference type="Rhea" id="RHEA:10596"/>
        <dbReference type="Rhea" id="RHEA-COMP:10136"/>
        <dbReference type="Rhea" id="RHEA-COMP:20101"/>
        <dbReference type="ChEBI" id="CHEBI:15378"/>
        <dbReference type="ChEBI" id="CHEBI:30616"/>
        <dbReference type="ChEBI" id="CHEBI:46858"/>
        <dbReference type="ChEBI" id="CHEBI:61978"/>
        <dbReference type="ChEBI" id="CHEBI:456216"/>
        <dbReference type="EC" id="2.7.10.2"/>
    </reaction>
</comment>
<comment type="subunit">
    <text evidence="2 6 9 13">Interacts with STAM2 and MYO18A (PubMed:10899310). Interacts with SHB (PubMed:12200137). Interacts with CD69 (By similarity).</text>
</comment>
<comment type="interaction">
    <interactant intactId="EBI-518246">
        <id>P52333</id>
    </interactant>
    <interactant intactId="EBI-1364">
        <id>Q07666</id>
        <label>KHDRBS1</label>
    </interactant>
    <organismsDiffer>false</organismsDiffer>
    <experiments>2</experiments>
</comment>
<comment type="interaction">
    <interactant intactId="EBI-518246">
        <id>P52333</id>
    </interactant>
    <interactant intactId="EBI-725832">
        <id>Q9UNF1</id>
        <label>MAGED2</label>
    </interactant>
    <organismsDiffer>false</organismsDiffer>
    <experiments>4</experiments>
</comment>
<comment type="interaction">
    <interactant intactId="EBI-518246">
        <id>P52333</id>
    </interactant>
    <interactant intactId="EBI-356392">
        <id>P55209</id>
        <label>NAP1L1</label>
    </interactant>
    <organismsDiffer>false</organismsDiffer>
    <experiments>4</experiments>
</comment>
<comment type="subcellular location">
    <subcellularLocation>
        <location evidence="1">Endomembrane system</location>
        <topology evidence="1">Peripheral membrane protein</topology>
    </subcellularLocation>
    <subcellularLocation>
        <location evidence="1">Cytoplasm</location>
    </subcellularLocation>
</comment>
<comment type="alternative products">
    <event type="alternative splicing"/>
    <isoform>
        <id>P52333-1</id>
        <name>2</name>
        <name>JAK3S</name>
        <name>Spleen-JAK3</name>
        <sequence type="displayed"/>
    </isoform>
    <isoform>
        <id>P52333-2</id>
        <name>1</name>
        <name>JAK3B</name>
        <name>Breast-JAK3</name>
        <sequence type="described" ref="VSP_004989"/>
    </isoform>
    <isoform>
        <id>P52333-4</id>
        <name>3</name>
        <sequence type="described" ref="VSP_054165 VSP_054166"/>
    </isoform>
</comment>
<comment type="tissue specificity">
    <text evidence="17">In NK cells and an NK-like cell line but not in resting T-cells or in other tissues. The S-form is more commonly seen in hematopoietic lines, whereas the B-form is detected in cells both of hematopoietic and epithelial origins.</text>
</comment>
<comment type="domain">
    <text evidence="1 10">Possesses two phosphotransferase domains. The second one probably contains the catalytic domain (By similarity), while the presence of slight differences suggest a different role for domain 1.</text>
</comment>
<comment type="PTM">
    <text evidence="27 28 29 30">Tyrosine phosphorylated in response to IL-2 and IL-4. Dephosphorylation of Tyr-980 and Tyr-981 by PTPN2 negatively regulates cytokine-mediated signaling (Probable).</text>
</comment>
<comment type="disease" evidence="7 11 18 21 22">
    <disease id="DI-01017">
        <name>Severe combined immunodeficiency autosomal recessive T-cell-negative/B-cell-positive/NK-cell-negative</name>
        <acronym>T(-)B(+)NK(-) SCID</acronym>
        <description>A form of severe combined immunodeficiency (SCID), a genetically and clinically heterogeneous group of rare congenital disorders characterized by impairment of both humoral and cell-mediated immunity, leukopenia, and low or absent antibody levels. Patients present in infancy recurrent, persistent infections by opportunistic organisms. The common characteristic of all types of SCID is absence of T-cell-mediated cellular immunity due to a defect in T-cell development.</description>
        <dbReference type="MIM" id="600802"/>
    </disease>
    <text>The disease is caused by variants affecting the gene represented in this entry.</text>
</comment>
<comment type="miscellaneous">
    <molecule>Isoform 1</molecule>
    <text evidence="26">May be inactive as it lacks some part of the kinase domain.</text>
</comment>
<comment type="similarity">
    <text evidence="4">Belongs to the protein kinase superfamily. Tyr protein kinase family. JAK subfamily.</text>
</comment>
<comment type="sequence caution" evidence="26">
    <conflict type="miscellaneous discrepancy">
        <sequence resource="EMBL-CDS" id="AAC50227"/>
    </conflict>
    <text>Wrong choice of CDS. Was erroneously described as an isoform JAK3M while it is a fragmentary mRNA of INSL3.</text>
</comment>
<comment type="online information" name="Atlas of Genetics and Cytogenetics in Oncology and Haematology">
    <link uri="https://atlasgeneticsoncology.org/gene/41032/JAK3"/>
</comment>
<comment type="online information" name="JAK3base">
    <link uri="https://databases.lovd.nl/shared/genes/JAK3"/>
    <text>JAK3 mutation db</text>
</comment>
<protein>
    <recommendedName>
        <fullName evidence="26">Tyrosine-protein kinase JAK3</fullName>
        <ecNumber>2.7.10.2</ecNumber>
    </recommendedName>
    <alternativeName>
        <fullName>Janus kinase 3</fullName>
        <shortName>JAK-3</shortName>
    </alternativeName>
    <alternativeName>
        <fullName>Leukocyte janus kinase</fullName>
        <shortName>L-JAK</shortName>
    </alternativeName>
</protein>